<organism>
    <name type="scientific">Burkholderia ambifaria (strain MC40-6)</name>
    <dbReference type="NCBI Taxonomy" id="398577"/>
    <lineage>
        <taxon>Bacteria</taxon>
        <taxon>Pseudomonadati</taxon>
        <taxon>Pseudomonadota</taxon>
        <taxon>Betaproteobacteria</taxon>
        <taxon>Burkholderiales</taxon>
        <taxon>Burkholderiaceae</taxon>
        <taxon>Burkholderia</taxon>
        <taxon>Burkholderia cepacia complex</taxon>
    </lineage>
</organism>
<reference key="1">
    <citation type="submission" date="2008-04" db="EMBL/GenBank/DDBJ databases">
        <title>Complete sequence of chromosome 3 of Burkholderia ambifaria MC40-6.</title>
        <authorList>
            <person name="Copeland A."/>
            <person name="Lucas S."/>
            <person name="Lapidus A."/>
            <person name="Glavina del Rio T."/>
            <person name="Dalin E."/>
            <person name="Tice H."/>
            <person name="Pitluck S."/>
            <person name="Chain P."/>
            <person name="Malfatti S."/>
            <person name="Shin M."/>
            <person name="Vergez L."/>
            <person name="Lang D."/>
            <person name="Schmutz J."/>
            <person name="Larimer F."/>
            <person name="Land M."/>
            <person name="Hauser L."/>
            <person name="Kyrpides N."/>
            <person name="Lykidis A."/>
            <person name="Ramette A."/>
            <person name="Konstantinidis K."/>
            <person name="Tiedje J."/>
            <person name="Richardson P."/>
        </authorList>
    </citation>
    <scope>NUCLEOTIDE SEQUENCE [LARGE SCALE GENOMIC DNA]</scope>
    <source>
        <strain>MC40-6</strain>
    </source>
</reference>
<keyword id="KW-0349">Heme</keyword>
<keyword id="KW-0376">Hydrogen peroxide</keyword>
<keyword id="KW-0408">Iron</keyword>
<keyword id="KW-0479">Metal-binding</keyword>
<keyword id="KW-0560">Oxidoreductase</keyword>
<keyword id="KW-0575">Peroxidase</keyword>
<keyword id="KW-0732">Signal</keyword>
<evidence type="ECO:0000255" key="1">
    <source>
        <dbReference type="HAMAP-Rule" id="MF_01961"/>
    </source>
</evidence>
<accession>B1Z5M2</accession>
<gene>
    <name evidence="1" type="primary">katG2</name>
    <name type="ordered locus">BamMC406_5625</name>
</gene>
<comment type="function">
    <text evidence="1">Bifunctional enzyme with both catalase and broad-spectrum peroxidase activity.</text>
</comment>
<comment type="catalytic activity">
    <reaction evidence="1">
        <text>H2O2 + AH2 = A + 2 H2O</text>
        <dbReference type="Rhea" id="RHEA:30275"/>
        <dbReference type="ChEBI" id="CHEBI:13193"/>
        <dbReference type="ChEBI" id="CHEBI:15377"/>
        <dbReference type="ChEBI" id="CHEBI:16240"/>
        <dbReference type="ChEBI" id="CHEBI:17499"/>
        <dbReference type="EC" id="1.11.1.21"/>
    </reaction>
</comment>
<comment type="catalytic activity">
    <reaction evidence="1">
        <text>2 H2O2 = O2 + 2 H2O</text>
        <dbReference type="Rhea" id="RHEA:20309"/>
        <dbReference type="ChEBI" id="CHEBI:15377"/>
        <dbReference type="ChEBI" id="CHEBI:15379"/>
        <dbReference type="ChEBI" id="CHEBI:16240"/>
        <dbReference type="EC" id="1.11.1.21"/>
    </reaction>
</comment>
<comment type="cofactor">
    <cofactor evidence="1">
        <name>heme b</name>
        <dbReference type="ChEBI" id="CHEBI:60344"/>
    </cofactor>
    <text evidence="1">Binds 1 heme b (iron(II)-protoporphyrin IX) group per dimer.</text>
</comment>
<comment type="subunit">
    <text evidence="1">Homodimer or homotetramer.</text>
</comment>
<comment type="PTM">
    <text evidence="1">Formation of the three residue Trp-Tyr-Met cross-link is important for the catalase, but not the peroxidase activity of the enzyme.</text>
</comment>
<comment type="similarity">
    <text evidence="1">Belongs to the peroxidase family. Peroxidase/catalase subfamily.</text>
</comment>
<feature type="signal peptide" evidence="1">
    <location>
        <begin position="1"/>
        <end position="28"/>
    </location>
</feature>
<feature type="chain" id="PRO_5000334004" description="Catalase-peroxidase 2">
    <location>
        <begin position="29"/>
        <end position="741"/>
    </location>
</feature>
<feature type="active site" description="Proton acceptor" evidence="1">
    <location>
        <position position="108"/>
    </location>
</feature>
<feature type="binding site" description="axial binding residue" evidence="1">
    <location>
        <position position="269"/>
    </location>
    <ligand>
        <name>heme b</name>
        <dbReference type="ChEBI" id="CHEBI:60344"/>
    </ligand>
    <ligandPart>
        <name>Fe</name>
        <dbReference type="ChEBI" id="CHEBI:18248"/>
    </ligandPart>
</feature>
<feature type="site" description="Transition state stabilizer" evidence="1">
    <location>
        <position position="104"/>
    </location>
</feature>
<feature type="cross-link" description="Tryptophyl-tyrosyl-methioninium (Trp-Tyr) (with M-254)" evidence="1">
    <location>
        <begin position="107"/>
        <end position="228"/>
    </location>
</feature>
<feature type="cross-link" description="Tryptophyl-tyrosyl-methioninium (Tyr-Met) (with W-107)" evidence="1">
    <location>
        <begin position="228"/>
        <end position="254"/>
    </location>
</feature>
<dbReference type="EC" id="1.11.1.21" evidence="1"/>
<dbReference type="EMBL" id="CP001027">
    <property type="protein sequence ID" value="ACB68068.1"/>
    <property type="molecule type" value="Genomic_DNA"/>
</dbReference>
<dbReference type="SMR" id="B1Z5M2"/>
<dbReference type="KEGG" id="bac:BamMC406_5625"/>
<dbReference type="HOGENOM" id="CLU_025424_2_0_4"/>
<dbReference type="OrthoDB" id="9759743at2"/>
<dbReference type="Proteomes" id="UP000001680">
    <property type="component" value="Chromosome 3"/>
</dbReference>
<dbReference type="GO" id="GO:0005829">
    <property type="term" value="C:cytosol"/>
    <property type="evidence" value="ECO:0007669"/>
    <property type="project" value="TreeGrafter"/>
</dbReference>
<dbReference type="GO" id="GO:0004096">
    <property type="term" value="F:catalase activity"/>
    <property type="evidence" value="ECO:0007669"/>
    <property type="project" value="UniProtKB-UniRule"/>
</dbReference>
<dbReference type="GO" id="GO:0020037">
    <property type="term" value="F:heme binding"/>
    <property type="evidence" value="ECO:0007669"/>
    <property type="project" value="InterPro"/>
</dbReference>
<dbReference type="GO" id="GO:0046872">
    <property type="term" value="F:metal ion binding"/>
    <property type="evidence" value="ECO:0007669"/>
    <property type="project" value="UniProtKB-KW"/>
</dbReference>
<dbReference type="GO" id="GO:0070301">
    <property type="term" value="P:cellular response to hydrogen peroxide"/>
    <property type="evidence" value="ECO:0007669"/>
    <property type="project" value="TreeGrafter"/>
</dbReference>
<dbReference type="GO" id="GO:0042744">
    <property type="term" value="P:hydrogen peroxide catabolic process"/>
    <property type="evidence" value="ECO:0007669"/>
    <property type="project" value="UniProtKB-KW"/>
</dbReference>
<dbReference type="CDD" id="cd08200">
    <property type="entry name" value="catalase_peroxidase_2"/>
    <property type="match status" value="1"/>
</dbReference>
<dbReference type="FunFam" id="1.10.420.10:FF:000004">
    <property type="entry name" value="Catalase-peroxidase"/>
    <property type="match status" value="1"/>
</dbReference>
<dbReference type="FunFam" id="1.10.520.10:FF:000002">
    <property type="entry name" value="Catalase-peroxidase"/>
    <property type="match status" value="1"/>
</dbReference>
<dbReference type="Gene3D" id="1.10.520.10">
    <property type="match status" value="2"/>
</dbReference>
<dbReference type="Gene3D" id="1.10.420.10">
    <property type="entry name" value="Peroxidase, domain 2"/>
    <property type="match status" value="2"/>
</dbReference>
<dbReference type="HAMAP" id="MF_01961">
    <property type="entry name" value="Catal_peroxid"/>
    <property type="match status" value="1"/>
</dbReference>
<dbReference type="InterPro" id="IPR000763">
    <property type="entry name" value="Catalase_peroxidase"/>
</dbReference>
<dbReference type="InterPro" id="IPR002016">
    <property type="entry name" value="Haem_peroxidase"/>
</dbReference>
<dbReference type="InterPro" id="IPR010255">
    <property type="entry name" value="Haem_peroxidase_sf"/>
</dbReference>
<dbReference type="InterPro" id="IPR019794">
    <property type="entry name" value="Peroxidases_AS"/>
</dbReference>
<dbReference type="InterPro" id="IPR019793">
    <property type="entry name" value="Peroxidases_heam-ligand_BS"/>
</dbReference>
<dbReference type="NCBIfam" id="TIGR00198">
    <property type="entry name" value="cat_per_HPI"/>
    <property type="match status" value="1"/>
</dbReference>
<dbReference type="NCBIfam" id="NF011635">
    <property type="entry name" value="PRK15061.1"/>
    <property type="match status" value="1"/>
</dbReference>
<dbReference type="PANTHER" id="PTHR30555:SF0">
    <property type="entry name" value="CATALASE-PEROXIDASE"/>
    <property type="match status" value="1"/>
</dbReference>
<dbReference type="PANTHER" id="PTHR30555">
    <property type="entry name" value="HYDROPEROXIDASE I, BIFUNCTIONAL CATALASE-PEROXIDASE"/>
    <property type="match status" value="1"/>
</dbReference>
<dbReference type="Pfam" id="PF00141">
    <property type="entry name" value="peroxidase"/>
    <property type="match status" value="2"/>
</dbReference>
<dbReference type="PRINTS" id="PR00460">
    <property type="entry name" value="BPEROXIDASE"/>
</dbReference>
<dbReference type="PRINTS" id="PR00458">
    <property type="entry name" value="PEROXIDASE"/>
</dbReference>
<dbReference type="SUPFAM" id="SSF48113">
    <property type="entry name" value="Heme-dependent peroxidases"/>
    <property type="match status" value="2"/>
</dbReference>
<dbReference type="PROSITE" id="PS00435">
    <property type="entry name" value="PEROXIDASE_1"/>
    <property type="match status" value="1"/>
</dbReference>
<dbReference type="PROSITE" id="PS00436">
    <property type="entry name" value="PEROXIDASE_2"/>
    <property type="match status" value="1"/>
</dbReference>
<dbReference type="PROSITE" id="PS50873">
    <property type="entry name" value="PEROXIDASE_4"/>
    <property type="match status" value="1"/>
</dbReference>
<protein>
    <recommendedName>
        <fullName evidence="1">Catalase-peroxidase 2</fullName>
        <shortName evidence="1">CP 2</shortName>
        <ecNumber evidence="1">1.11.1.21</ecNumber>
    </recommendedName>
    <alternativeName>
        <fullName evidence="1">Peroxidase/catalase 2</fullName>
    </alternativeName>
</protein>
<sequence>MQKKRIGKSVVAALAIIAMSAGTVAAWADGAPRTNDFWWPERLDLSPLRQHDVESNPYGKDFDYAQAFNKLDIEAVKKDIRATLTTSQDWWPADYGNYGPFFIRMAWHGAGTYRTYDGRGGAGGAQQRFEPLNSWPDNANLDKARRLLWPIKKKYGQNISWGDLMVLTGNVALESMGFQTFGFGGGREDDWQSDLVYWGAGTKFMSDNRDKNGKLEKPLAATQMGLIYVNPEGPNGNPDPVAAAKDIREAFGRMAMNDEETLALIAGGHTFGKAHGAASPDKCVGAAPAGAGVEAQGLGWANKCGTGKGADTITSGLEGAWSVDPVHFTMQYLDNLLEHDWVLTKSPAGAHQWMPKDAQDIVPDAHDPSKRHPLMMFTTDIALKVDPAYSAIAKRFQAHPEEFKLAFAKAWFKLTHRDLGPKARYLGKDVPKVDLIWQDPLPVAGYQMIGDADIAELKRRILASGVPKSELIKTAWASAASFRATDYRGGANGARIRLAPENAWAVNDPASLSKVLKSLEDIQSGFNRNRTDGKQVSLADLIVLGGSAAVEDAARKAGYDVKVPFSPGRVDATQAQTDVASFAVLEPTSDGFRNYYRKSNERSPAELMVDRASKLDLSVPEMTVLVGGLRALDANAGHSRLGVLTNRPGTLSNDFFVNLLDMSTQWTKSSSADGTYEGRDRKTGALKWTASPVDLVFGSSSELRAVAEVYASDDAHEKFVRDFVHAWTKVMNLDRFDLKRS</sequence>
<name>KATG2_BURA4</name>
<proteinExistence type="inferred from homology"/>